<gene>
    <name type="primary">DLT1</name>
    <name type="ORF">Kpol_1025p10</name>
</gene>
<dbReference type="EMBL" id="DS480410">
    <property type="protein sequence ID" value="EDO17091.1"/>
    <property type="molecule type" value="Genomic_DNA"/>
</dbReference>
<dbReference type="RefSeq" id="XP_001644949.1">
    <property type="nucleotide sequence ID" value="XM_001644899.1"/>
</dbReference>
<dbReference type="FunCoup" id="A7TKT6">
    <property type="interactions" value="23"/>
</dbReference>
<dbReference type="STRING" id="436907.A7TKT6"/>
<dbReference type="GeneID" id="5545282"/>
<dbReference type="KEGG" id="vpo:Kpol_1025p10"/>
<dbReference type="eggNOG" id="ENOG502RAJJ">
    <property type="taxonomic scope" value="Eukaryota"/>
</dbReference>
<dbReference type="HOGENOM" id="CLU_066044_0_0_1"/>
<dbReference type="InParanoid" id="A7TKT6"/>
<dbReference type="OMA" id="ITHHEFE"/>
<dbReference type="OrthoDB" id="4096362at2759"/>
<dbReference type="PhylomeDB" id="A7TKT6"/>
<dbReference type="Proteomes" id="UP000000267">
    <property type="component" value="Unassembled WGS sequence"/>
</dbReference>
<dbReference type="GO" id="GO:0016020">
    <property type="term" value="C:membrane"/>
    <property type="evidence" value="ECO:0007669"/>
    <property type="project" value="UniProtKB-SubCell"/>
</dbReference>
<dbReference type="InterPro" id="IPR038869">
    <property type="entry name" value="DLT1"/>
</dbReference>
<dbReference type="PANTHER" id="PTHR40021">
    <property type="entry name" value="DEFECT AT LOW TEMPERATURE PROTEIN 1"/>
    <property type="match status" value="1"/>
</dbReference>
<dbReference type="PANTHER" id="PTHR40021:SF1">
    <property type="entry name" value="DEFECT AT LOW TEMPERATURE PROTEIN 1"/>
    <property type="match status" value="1"/>
</dbReference>
<organism>
    <name type="scientific">Vanderwaltozyma polyspora (strain ATCC 22028 / DSM 70294 / BCRC 21397 / CBS 2163 / NBRC 10782 / NRRL Y-8283 / UCD 57-17)</name>
    <name type="common">Kluyveromyces polysporus</name>
    <dbReference type="NCBI Taxonomy" id="436907"/>
    <lineage>
        <taxon>Eukaryota</taxon>
        <taxon>Fungi</taxon>
        <taxon>Dikarya</taxon>
        <taxon>Ascomycota</taxon>
        <taxon>Saccharomycotina</taxon>
        <taxon>Saccharomycetes</taxon>
        <taxon>Saccharomycetales</taxon>
        <taxon>Saccharomycetaceae</taxon>
        <taxon>Vanderwaltozyma</taxon>
    </lineage>
</organism>
<proteinExistence type="inferred from homology"/>
<keyword id="KW-0472">Membrane</keyword>
<keyword id="KW-1185">Reference proteome</keyword>
<keyword id="KW-0812">Transmembrane</keyword>
<keyword id="KW-1133">Transmembrane helix</keyword>
<reference key="1">
    <citation type="journal article" date="2007" name="Proc. Natl. Acad. Sci. U.S.A.">
        <title>Independent sorting-out of thousands of duplicated gene pairs in two yeast species descended from a whole-genome duplication.</title>
        <authorList>
            <person name="Scannell D.R."/>
            <person name="Frank A.C."/>
            <person name="Conant G.C."/>
            <person name="Byrne K.P."/>
            <person name="Woolfit M."/>
            <person name="Wolfe K.H."/>
        </authorList>
    </citation>
    <scope>NUCLEOTIDE SEQUENCE [LARGE SCALE GENOMIC DNA]</scope>
    <source>
        <strain>ATCC 22028 / DSM 70294 / BCRC 21397 / CBS 2163 / NBRC 10782 / NRRL Y-8283 / UCD 57-17</strain>
    </source>
</reference>
<protein>
    <recommendedName>
        <fullName>Defect at low temperature protein 1</fullName>
    </recommendedName>
</protein>
<evidence type="ECO:0000250" key="1"/>
<evidence type="ECO:0000255" key="2"/>
<evidence type="ECO:0000305" key="3"/>
<name>DLT1_VANPO</name>
<accession>A7TKT6</accession>
<comment type="function">
    <text evidence="1">Required for growth under high-pressure and low-temperature conditions.</text>
</comment>
<comment type="subcellular location">
    <subcellularLocation>
        <location evidence="3">Membrane</location>
        <topology evidence="3">Multi-pass membrane protein</topology>
    </subcellularLocation>
</comment>
<comment type="similarity">
    <text evidence="3">Belongs to the DLT1 family.</text>
</comment>
<feature type="chain" id="PRO_0000399023" description="Defect at low temperature protein 1">
    <location>
        <begin position="1"/>
        <end position="348"/>
    </location>
</feature>
<feature type="topological domain" description="Cytoplasmic" evidence="2">
    <location>
        <begin position="1"/>
        <end position="14"/>
    </location>
</feature>
<feature type="transmembrane region" description="Helical" evidence="2">
    <location>
        <begin position="15"/>
        <end position="35"/>
    </location>
</feature>
<feature type="topological domain" description="Extracellular" evidence="2">
    <location>
        <begin position="36"/>
        <end position="47"/>
    </location>
</feature>
<feature type="transmembrane region" description="Helical" evidence="2">
    <location>
        <begin position="48"/>
        <end position="68"/>
    </location>
</feature>
<feature type="topological domain" description="Cytoplasmic" evidence="2">
    <location>
        <begin position="69"/>
        <end position="348"/>
    </location>
</feature>
<sequence>MTGISLLWLWSKRGFIFISYVFLVCFAAVLPIDSIAQASQSSNNALNTFIVVGALVIFAVVCIILIVGRSLYFKSCLQDVPRRYIPSTAIDLPHRGSRELVTQGVEASKQLSTMFIKPKDPVIHPGVEPPERCDDPNIDKVFPEYLNYHSCIKNIADRFKYKGVFMSVDKNKLDIDSTFSDIVREKYIISNENVAVKQNAERLIELYEVLRFSGNPITREQFVYFVELCIYLVEHSLTHHIEEDLTKFPSNTMFSIGEFSTGLQASRIQSRYSAAQSFENDFGENLLNAQLSELLQNKSRIEEERLGRLRRLAGSINESEDEAISSSISRWNTSSGSITNSYSTVVRH</sequence>